<name>MCH_RAT</name>
<evidence type="ECO:0000250" key="1"/>
<evidence type="ECO:0000255" key="2"/>
<evidence type="ECO:0000256" key="3">
    <source>
        <dbReference type="SAM" id="MobiDB-lite"/>
    </source>
</evidence>
<evidence type="ECO:0000269" key="4">
    <source>
    </source>
</evidence>
<evidence type="ECO:0000269" key="5">
    <source>
    </source>
</evidence>
<evidence type="ECO:0000269" key="6">
    <source>
    </source>
</evidence>
<evidence type="ECO:0000269" key="7">
    <source>
    </source>
</evidence>
<evidence type="ECO:0000269" key="8">
    <source>
    </source>
</evidence>
<evidence type="ECO:0000305" key="9"/>
<comment type="function">
    <text>MCH inhibits ACTH secretion at the end of the light on period which corresponds to the peak of the circadian rhythm in ACTH. Inhibits also stress induced ACTH release during the light off period of the cycle. Involved as a neurotransmitter or neuromodulator in a broad array of neuronal functions. Stimulates sexual behavior when injected into the ventromedial nucleus, this effect is antagonized by NEI. In the medial preoptic area, stimulates anxiety and sexual behavior. Antagonizes inhibitory effect of melanotropin alpha on exploration behavior.</text>
</comment>
<comment type="function">
    <text>NEI can influence differentiation of neuronal processes in brain neurons. Affects the content of neurofilament protein in neuritogenesis (in vitro). May also be a neuromodulatory factor. In behavioral tests, it stimulates exploration and anxiety when injected into the ventromedial nucleus. Also stimulates grooming, locomotion and rearing. May antagonize the inhibitory effect of mch on ACTH release. Reduces dopamine and dopac release in the ventromedial nucleus.</text>
</comment>
<comment type="subcellular location">
    <subcellularLocation>
        <location>Secreted</location>
    </subcellularLocation>
</comment>
<comment type="tissue specificity">
    <text evidence="6 7 8">MCH is present in all regions of the brain and in neurointermediate lobe of the pituarity gland, with highest concentrations in the hypothalamus. Also expressed to a much lesser extent in stomach, lamina propria of both duodenum and colon, ovary, thymus, pancreas, adrenal gland and testis (spermatogonia, early spermatocytes and Sertoli cells). Weak expression in heart and lung. The other peptides are expressed at least in Sertoli cells, nei being also expressed in brain, stomach and proximal duodenum. In brain exclusively mature mch and nei peptides are present. In peripheral tissues a large product, encompassing the NEI and MCH domains of the precursor, is found predominantly. At low levels fully processed MCH and NEI peptides are present in gut. No expression in peripheral blood.</text>
</comment>
<comment type="developmental stage">
    <text>Expression is strongly increased in hypothalamus between postnatal days 12 and 20, to reach high constant values in adult.</text>
</comment>
<comment type="induction">
    <text>Inhibited by neurogenic stress or osmotic stress.</text>
</comment>
<comment type="PTM">
    <text evidence="4 5">Pro-MCH is processed differentially in the brain and in peripheral organs producing two neuropeptides; NEI and MCH. A third peptide, NGE, may also be produced. Preferential processing in neurons by prohormone convertase 2 (PC2) generates NEI. MCH is generated in neurons of the lateral hypothalmic area by several prohormone convertases including PC1/3, PC2 and PC5/6.</text>
</comment>
<comment type="similarity">
    <text evidence="9">Belongs to the melanin-concentrating hormone family.</text>
</comment>
<keyword id="KW-0027">Amidation</keyword>
<keyword id="KW-0165">Cleavage on pair of basic residues</keyword>
<keyword id="KW-0903">Direct protein sequencing</keyword>
<keyword id="KW-1015">Disulfide bond</keyword>
<keyword id="KW-0372">Hormone</keyword>
<keyword id="KW-0527">Neuropeptide</keyword>
<keyword id="KW-1185">Reference proteome</keyword>
<keyword id="KW-0964">Secreted</keyword>
<keyword id="KW-0732">Signal</keyword>
<feature type="signal peptide" evidence="2">
    <location>
        <begin position="1"/>
        <end position="21"/>
    </location>
</feature>
<feature type="chain" id="PRO_0000019116" description="Pro-MCH">
    <location>
        <begin position="22"/>
        <end position="165"/>
    </location>
</feature>
<feature type="peptide" id="PRO_0000019117" description="Neuropeptide-glycine-glutamic acid" evidence="2">
    <location>
        <begin position="110"/>
        <end position="128"/>
    </location>
</feature>
<feature type="peptide" id="PRO_0000019118" description="Neuropeptide-glutamic acid-isoleucine">
    <location>
        <begin position="131"/>
        <end position="143"/>
    </location>
</feature>
<feature type="peptide" id="PRO_0000019119" description="Melanin-concentrating hormone">
    <location>
        <begin position="147"/>
        <end position="165"/>
    </location>
</feature>
<feature type="region of interest" description="Disordered" evidence="3">
    <location>
        <begin position="69"/>
        <end position="89"/>
    </location>
</feature>
<feature type="compositionally biased region" description="Basic and acidic residues" evidence="3">
    <location>
        <begin position="69"/>
        <end position="82"/>
    </location>
</feature>
<feature type="modified residue" description="Isoleucine amide" evidence="5">
    <location>
        <position position="143"/>
    </location>
</feature>
<feature type="disulfide bond" evidence="1">
    <location>
        <begin position="153"/>
        <end position="162"/>
    </location>
</feature>
<sequence>MAKMSLSSYMLMLAFSLFSHGILLSASKSIRNVEDDIVFNTFRMGKAFQKEDTAERSVVAPSLEGYKNDESGFMKDDDDKTTKNTGSKQNLVTHGLPLSLAVKPYLALKGPAVFPAENGVQNTESTQEKREIGDEENSAKFPIGRRDFDMLRCMLGRVYRPCWQV</sequence>
<organism>
    <name type="scientific">Rattus norvegicus</name>
    <name type="common">Rat</name>
    <dbReference type="NCBI Taxonomy" id="10116"/>
    <lineage>
        <taxon>Eukaryota</taxon>
        <taxon>Metazoa</taxon>
        <taxon>Chordata</taxon>
        <taxon>Craniata</taxon>
        <taxon>Vertebrata</taxon>
        <taxon>Euteleostomi</taxon>
        <taxon>Mammalia</taxon>
        <taxon>Eutheria</taxon>
        <taxon>Euarchontoglires</taxon>
        <taxon>Glires</taxon>
        <taxon>Rodentia</taxon>
        <taxon>Myomorpha</taxon>
        <taxon>Muroidea</taxon>
        <taxon>Muridae</taxon>
        <taxon>Murinae</taxon>
        <taxon>Rattus</taxon>
    </lineage>
</organism>
<protein>
    <recommendedName>
        <fullName>Pro-MCH</fullName>
    </recommendedName>
    <component>
        <recommendedName>
            <fullName>Neuropeptide-glycine-glutamic acid</fullName>
            <shortName>NGE</shortName>
            <shortName>Neuropeptide G-E</shortName>
        </recommendedName>
    </component>
    <component>
        <recommendedName>
            <fullName>Neuropeptide-glutamic acid-isoleucine</fullName>
            <shortName>NEI</shortName>
            <shortName>Neuropeptide E-I</shortName>
        </recommendedName>
    </component>
    <component>
        <recommendedName>
            <fullName>Melanin-concentrating hormone</fullName>
            <shortName>MCH</shortName>
        </recommendedName>
    </component>
</protein>
<accession>P14200</accession>
<reference key="1">
    <citation type="journal article" date="1989" name="Endocrinology">
        <title>The rat melanin-concentrating hormone messenger ribonucleic acid encodes multiple putative neuropeptides coexpressed in the dorsolateral hypothalamus.</title>
        <authorList>
            <person name="Nahon J.-L."/>
            <person name="Presse F."/>
            <person name="Bittencourt J.C."/>
            <person name="Sawchenko P.E."/>
            <person name="Vale W."/>
        </authorList>
    </citation>
    <scope>NUCLEOTIDE SEQUENCE [MRNA]</scope>
    <source>
        <tissue>Hypothalamus</tissue>
    </source>
</reference>
<reference key="2">
    <citation type="journal article" date="1990" name="DNA Cell Biol.">
        <title>Nucleotide sequence and tissue-specific expression of the rat melanin concentrating hormone gene.</title>
        <authorList>
            <person name="Thompson R.C."/>
            <person name="Watson S.J."/>
        </authorList>
    </citation>
    <scope>NUCLEOTIDE SEQUENCE [GENOMIC DNA]</scope>
</reference>
<reference key="3">
    <citation type="journal article" date="1989" name="Endocrinology">
        <title>Characterization of melanin-concentrating hormone from rat hypothalamus.</title>
        <authorList>
            <person name="Vaughan J.M."/>
            <person name="Fischer W.H."/>
            <person name="Hoeger C."/>
            <person name="Rivier J."/>
            <person name="Vale W."/>
        </authorList>
    </citation>
    <scope>PROTEIN SEQUENCE OF 147-165</scope>
    <source>
        <tissue>Hypothalamus</tissue>
    </source>
</reference>
<reference key="4">
    <citation type="journal article" date="1995" name="Neuroendocrinology">
        <title>Pro-melanin concentrating hormone messenger ribonucleic acid and peptides expression in peripheral tissues of the rat.</title>
        <authorList>
            <person name="Hervieu G."/>
            <person name="Nahon J.-L."/>
        </authorList>
    </citation>
    <scope>TISSUE SPECIFICITY</scope>
    <source>
        <strain>Sprague-Dawley</strain>
        <strain>Wistar</strain>
    </source>
</reference>
<reference key="5">
    <citation type="journal article" date="1996" name="Endocrinology">
        <title>Similarities in cellular expression and functions of melanin-concentrating hormone and atrial natriuretic factor in the rat digestive tract.</title>
        <authorList>
            <person name="Hervieu G."/>
            <person name="Volant K."/>
            <person name="Grishina O."/>
            <person name="Descroix-Vagne M."/>
            <person name="Nahon J.-L."/>
        </authorList>
    </citation>
    <scope>TISSUE SPECIFICITY</scope>
</reference>
<reference key="6">
    <citation type="journal article" date="1995" name="Neuroendocrinology">
        <title>Melanin-concentrating hormone in human and rat.</title>
        <authorList>
            <person name="Takahashi K."/>
            <person name="Suzuki H."/>
            <person name="Totsune K."/>
            <person name="Murakami O."/>
            <person name="Satoh F."/>
            <person name="Sone M."/>
            <person name="Sasano H."/>
            <person name="Mouri T."/>
            <person name="Shibahara S."/>
        </authorList>
    </citation>
    <scope>TISSUE SPECIFICITY</scope>
</reference>
<reference key="7">
    <citation type="journal article" date="1992" name="Endocrinology">
        <title>Secretion of melanin-concentrating hormone and neuropeptide-EI from cultured rat hypothalamic cells.</title>
        <authorList>
            <person name="Parkes D."/>
            <person name="Vale W."/>
        </authorList>
    </citation>
    <scope>PROTEOLYTIC PROCESSING</scope>
    <scope>AMIDATION AT ILE-143</scope>
</reference>
<reference key="8">
    <citation type="journal article" date="1999" name="J. Biol. Chem.">
        <title>Cellular localization and role of prohormone convertases in the processing of pro-melanin concentrating hormone in mammals.</title>
        <authorList>
            <person name="Viale A."/>
            <person name="Ortola C."/>
            <person name="Hervieu G."/>
            <person name="Furuta M."/>
            <person name="Barbero P."/>
            <person name="Steiner D.F."/>
            <person name="Seidah N.G."/>
            <person name="Nahon J.-L."/>
        </authorList>
    </citation>
    <scope>PROTEOLYTIC PROCESSING</scope>
</reference>
<reference key="9">
    <citation type="journal article" date="1995" name="J. Neuroendocrinol.">
        <title>Neuropeptide-E-I antagonizes the action of melanin-concentrating hormone on stress-induced release of adrenocorticotropin in the rat.</title>
        <authorList>
            <person name="Bluet-Pajot M.T."/>
            <person name="Presse F."/>
            <person name="Voko Z."/>
            <person name="Hoeger C."/>
            <person name="Mounier F."/>
            <person name="Epelbaum J."/>
            <person name="Nahon J.-L."/>
        </authorList>
    </citation>
    <scope>FUNCTION OF NEI</scope>
</reference>
<reference key="10">
    <citation type="journal article" date="1998" name="Peptides">
        <title>Behavioral effects of neuropeptide E-I (NEI) in the female rat: interactions with alpha-MSH, MCH and dopamine.</title>
        <authorList>
            <person name="Gonzalez M.I."/>
            <person name="Baker B.I."/>
            <person name="Hole D.R."/>
            <person name="Wilson C.A."/>
        </authorList>
    </citation>
    <scope>FUNCTION OF NEI</scope>
</reference>
<reference key="11">
    <citation type="journal article" date="1998" name="Peptides">
        <title>Melanocortin and MCH precursor-derived NEI effects on striatum-midbrain co-cultures.</title>
        <authorList>
            <person name="Kistler-Heer V."/>
            <person name="Schlumpf M."/>
            <person name="Lichtensteiger W."/>
        </authorList>
    </citation>
    <scope>FUNCTION OF MCH AND NEI</scope>
</reference>
<gene>
    <name type="primary">Pmch</name>
    <name type="synonym">Mch</name>
</gene>
<proteinExistence type="evidence at protein level"/>
<dbReference type="EMBL" id="M29712">
    <property type="protein sequence ID" value="AAA41580.1"/>
    <property type="molecule type" value="mRNA"/>
</dbReference>
<dbReference type="EMBL" id="M62641">
    <property type="protein sequence ID" value="AAA41581.1"/>
    <property type="molecule type" value="Genomic_DNA"/>
</dbReference>
<dbReference type="PIR" id="A36237">
    <property type="entry name" value="A36237"/>
</dbReference>
<dbReference type="RefSeq" id="NP_036757.1">
    <property type="nucleotide sequence ID" value="NM_012625.1"/>
</dbReference>
<dbReference type="FunCoup" id="P14200">
    <property type="interactions" value="9"/>
</dbReference>
<dbReference type="STRING" id="10116.ENSRNOP00000006174"/>
<dbReference type="PaxDb" id="10116-ENSRNOP00000006174"/>
<dbReference type="GeneID" id="24659"/>
<dbReference type="KEGG" id="rno:24659"/>
<dbReference type="UCSC" id="RGD:3358">
    <property type="organism name" value="rat"/>
</dbReference>
<dbReference type="AGR" id="RGD:3358"/>
<dbReference type="CTD" id="5367"/>
<dbReference type="RGD" id="3358">
    <property type="gene designation" value="Pmch"/>
</dbReference>
<dbReference type="eggNOG" id="ENOG502RZ12">
    <property type="taxonomic scope" value="Eukaryota"/>
</dbReference>
<dbReference type="InParanoid" id="P14200"/>
<dbReference type="PhylomeDB" id="P14200"/>
<dbReference type="Reactome" id="R-RNO-375276">
    <property type="pathway name" value="Peptide ligand-binding receptors"/>
</dbReference>
<dbReference type="Reactome" id="R-RNO-416476">
    <property type="pathway name" value="G alpha (q) signalling events"/>
</dbReference>
<dbReference type="Reactome" id="R-RNO-418594">
    <property type="pathway name" value="G alpha (i) signalling events"/>
</dbReference>
<dbReference type="PRO" id="PR:P14200"/>
<dbReference type="Proteomes" id="UP000002494">
    <property type="component" value="Unplaced"/>
</dbReference>
<dbReference type="GO" id="GO:0005615">
    <property type="term" value="C:extracellular space"/>
    <property type="evidence" value="ECO:0000314"/>
    <property type="project" value="RGD"/>
</dbReference>
<dbReference type="GO" id="GO:0005634">
    <property type="term" value="C:nucleus"/>
    <property type="evidence" value="ECO:0000266"/>
    <property type="project" value="RGD"/>
</dbReference>
<dbReference type="GO" id="GO:0045202">
    <property type="term" value="C:synapse"/>
    <property type="evidence" value="ECO:0007669"/>
    <property type="project" value="GOC"/>
</dbReference>
<dbReference type="GO" id="GO:0030354">
    <property type="term" value="F:melanin-concentrating hormone activity"/>
    <property type="evidence" value="ECO:0007669"/>
    <property type="project" value="InterPro"/>
</dbReference>
<dbReference type="GO" id="GO:0031777">
    <property type="term" value="F:type 1 melanin-concentrating hormone receptor binding"/>
    <property type="evidence" value="ECO:0000314"/>
    <property type="project" value="RGD"/>
</dbReference>
<dbReference type="GO" id="GO:0007268">
    <property type="term" value="P:chemical synaptic transmission"/>
    <property type="evidence" value="ECO:0007669"/>
    <property type="project" value="InterPro"/>
</dbReference>
<dbReference type="GO" id="GO:0042756">
    <property type="term" value="P:drinking behavior"/>
    <property type="evidence" value="ECO:0000314"/>
    <property type="project" value="RGD"/>
</dbReference>
<dbReference type="GO" id="GO:0007631">
    <property type="term" value="P:feeding behavior"/>
    <property type="evidence" value="ECO:0000314"/>
    <property type="project" value="RGD"/>
</dbReference>
<dbReference type="GO" id="GO:0007595">
    <property type="term" value="P:lactation"/>
    <property type="evidence" value="ECO:0000270"/>
    <property type="project" value="RGD"/>
</dbReference>
<dbReference type="GO" id="GO:0007611">
    <property type="term" value="P:learning or memory"/>
    <property type="evidence" value="ECO:0000304"/>
    <property type="project" value="RGD"/>
</dbReference>
<dbReference type="GO" id="GO:0045776">
    <property type="term" value="P:negative regulation of blood pressure"/>
    <property type="evidence" value="ECO:0000314"/>
    <property type="project" value="RGD"/>
</dbReference>
<dbReference type="GO" id="GO:0032227">
    <property type="term" value="P:negative regulation of synaptic transmission, dopaminergic"/>
    <property type="evidence" value="ECO:0000314"/>
    <property type="project" value="RGD"/>
</dbReference>
<dbReference type="GO" id="GO:0007218">
    <property type="term" value="P:neuropeptide signaling pathway"/>
    <property type="evidence" value="ECO:0007669"/>
    <property type="project" value="UniProtKB-KW"/>
</dbReference>
<dbReference type="GO" id="GO:0046005">
    <property type="term" value="P:positive regulation of circadian sleep/wake cycle, REM sleep"/>
    <property type="evidence" value="ECO:0000314"/>
    <property type="project" value="RGD"/>
</dbReference>
<dbReference type="GO" id="GO:0007204">
    <property type="term" value="P:positive regulation of cytosolic calcium ion concentration"/>
    <property type="evidence" value="ECO:0000314"/>
    <property type="project" value="RGD"/>
</dbReference>
<dbReference type="GO" id="GO:0002027">
    <property type="term" value="P:regulation of heart rate"/>
    <property type="evidence" value="ECO:0000314"/>
    <property type="project" value="RGD"/>
</dbReference>
<dbReference type="GO" id="GO:0048168">
    <property type="term" value="P:regulation of neuronal synaptic plasticity"/>
    <property type="evidence" value="ECO:0000315"/>
    <property type="project" value="RGD"/>
</dbReference>
<dbReference type="InterPro" id="IPR005456">
    <property type="entry name" value="Prepro-melanin_conc_hormone"/>
</dbReference>
<dbReference type="PANTHER" id="PTHR12091">
    <property type="entry name" value="MELANIN-CONCENTRATING HORMONE"/>
    <property type="match status" value="1"/>
</dbReference>
<dbReference type="PANTHER" id="PTHR12091:SF0">
    <property type="entry name" value="PRO-MCH"/>
    <property type="match status" value="1"/>
</dbReference>
<dbReference type="Pfam" id="PF05824">
    <property type="entry name" value="Pro-MCH"/>
    <property type="match status" value="1"/>
</dbReference>
<dbReference type="PRINTS" id="PR01641">
    <property type="entry name" value="PROMCHFAMILY"/>
</dbReference>